<name>RNZ_STRMU</name>
<keyword id="KW-0255">Endonuclease</keyword>
<keyword id="KW-0378">Hydrolase</keyword>
<keyword id="KW-0479">Metal-binding</keyword>
<keyword id="KW-0540">Nuclease</keyword>
<keyword id="KW-1185">Reference proteome</keyword>
<keyword id="KW-0819">tRNA processing</keyword>
<keyword id="KW-0862">Zinc</keyword>
<protein>
    <recommendedName>
        <fullName evidence="1">Ribonuclease Z</fullName>
        <shortName evidence="1">RNase Z</shortName>
        <ecNumber evidence="1">3.1.26.11</ecNumber>
    </recommendedName>
    <alternativeName>
        <fullName evidence="1">tRNA 3 endonuclease</fullName>
    </alternativeName>
    <alternativeName>
        <fullName evidence="1">tRNase Z</fullName>
    </alternativeName>
</protein>
<organism>
    <name type="scientific">Streptococcus mutans serotype c (strain ATCC 700610 / UA159)</name>
    <dbReference type="NCBI Taxonomy" id="210007"/>
    <lineage>
        <taxon>Bacteria</taxon>
        <taxon>Bacillati</taxon>
        <taxon>Bacillota</taxon>
        <taxon>Bacilli</taxon>
        <taxon>Lactobacillales</taxon>
        <taxon>Streptococcaceae</taxon>
        <taxon>Streptococcus</taxon>
    </lineage>
</organism>
<proteinExistence type="inferred from homology"/>
<sequence length="309" mass="34411">MEIQFLGTGAGQPAKARNVSSLVLKLLDELNEIWMFDCGEGTQRQILETTIKPRKIRKIFITHLHGDHVFGLPGFLSSRAFQANDEQTDVDIYGPVGIKHLVMASIRTSGAHLPYHIHFHEFDAKHLGKILETDKFMVYAEKLDHTIFCVGYRVVQKDLEGTLDAEKLKAAGLPFGPLFGRVKNGQDVVLEDGTTIIAKDYISAPKKGKVITILGDTRKTDASIRLALGADVLVHESTYSKGDENLARRHGHSTNTEAARVAKAASVKKLLLNHISARFLSHDISRMRDDAQEIFTDVHIVRDLEEVKL</sequence>
<gene>
    <name evidence="1" type="primary">rnz</name>
    <name type="ordered locus">SMU_1474c</name>
</gene>
<dbReference type="EC" id="3.1.26.11" evidence="1"/>
<dbReference type="EMBL" id="AE014133">
    <property type="protein sequence ID" value="AAN59130.1"/>
    <property type="molecule type" value="Genomic_DNA"/>
</dbReference>
<dbReference type="RefSeq" id="NP_721824.1">
    <property type="nucleotide sequence ID" value="NC_004350.2"/>
</dbReference>
<dbReference type="RefSeq" id="WP_002263072.1">
    <property type="nucleotide sequence ID" value="NC_004350.2"/>
</dbReference>
<dbReference type="SMR" id="Q8DT90"/>
<dbReference type="STRING" id="210007.SMU_1474c"/>
<dbReference type="KEGG" id="smu:SMU_1474c"/>
<dbReference type="PATRIC" id="fig|210007.7.peg.1311"/>
<dbReference type="eggNOG" id="COG1234">
    <property type="taxonomic scope" value="Bacteria"/>
</dbReference>
<dbReference type="HOGENOM" id="CLU_031317_2_0_9"/>
<dbReference type="OrthoDB" id="9800940at2"/>
<dbReference type="PhylomeDB" id="Q8DT90"/>
<dbReference type="Proteomes" id="UP000002512">
    <property type="component" value="Chromosome"/>
</dbReference>
<dbReference type="GO" id="GO:0042781">
    <property type="term" value="F:3'-tRNA processing endoribonuclease activity"/>
    <property type="evidence" value="ECO:0007669"/>
    <property type="project" value="UniProtKB-UniRule"/>
</dbReference>
<dbReference type="GO" id="GO:0008270">
    <property type="term" value="F:zinc ion binding"/>
    <property type="evidence" value="ECO:0007669"/>
    <property type="project" value="UniProtKB-UniRule"/>
</dbReference>
<dbReference type="CDD" id="cd07717">
    <property type="entry name" value="RNaseZ_ZiPD-like_MBL-fold"/>
    <property type="match status" value="1"/>
</dbReference>
<dbReference type="FunFam" id="3.60.15.10:FF:000002">
    <property type="entry name" value="Ribonuclease Z"/>
    <property type="match status" value="1"/>
</dbReference>
<dbReference type="Gene3D" id="3.60.15.10">
    <property type="entry name" value="Ribonuclease Z/Hydroxyacylglutathione hydrolase-like"/>
    <property type="match status" value="1"/>
</dbReference>
<dbReference type="HAMAP" id="MF_01818">
    <property type="entry name" value="RNase_Z_BN"/>
    <property type="match status" value="1"/>
</dbReference>
<dbReference type="InterPro" id="IPR001279">
    <property type="entry name" value="Metallo-B-lactamas"/>
</dbReference>
<dbReference type="InterPro" id="IPR036866">
    <property type="entry name" value="RibonucZ/Hydroxyglut_hydro"/>
</dbReference>
<dbReference type="InterPro" id="IPR013471">
    <property type="entry name" value="RNase_Z/BN"/>
</dbReference>
<dbReference type="NCBIfam" id="NF000801">
    <property type="entry name" value="PRK00055.1-3"/>
    <property type="match status" value="1"/>
</dbReference>
<dbReference type="NCBIfam" id="TIGR02651">
    <property type="entry name" value="RNase_Z"/>
    <property type="match status" value="1"/>
</dbReference>
<dbReference type="PANTHER" id="PTHR46018">
    <property type="entry name" value="ZINC PHOSPHODIESTERASE ELAC PROTEIN 1"/>
    <property type="match status" value="1"/>
</dbReference>
<dbReference type="PANTHER" id="PTHR46018:SF2">
    <property type="entry name" value="ZINC PHOSPHODIESTERASE ELAC PROTEIN 1"/>
    <property type="match status" value="1"/>
</dbReference>
<dbReference type="Pfam" id="PF00753">
    <property type="entry name" value="Lactamase_B"/>
    <property type="match status" value="1"/>
</dbReference>
<dbReference type="SUPFAM" id="SSF56281">
    <property type="entry name" value="Metallo-hydrolase/oxidoreductase"/>
    <property type="match status" value="1"/>
</dbReference>
<evidence type="ECO:0000255" key="1">
    <source>
        <dbReference type="HAMAP-Rule" id="MF_01818"/>
    </source>
</evidence>
<comment type="function">
    <text evidence="1">Zinc phosphodiesterase, which displays some tRNA 3'-processing endonuclease activity. Probably involved in tRNA maturation, by removing a 3'-trailer from precursor tRNA.</text>
</comment>
<comment type="catalytic activity">
    <reaction evidence="1">
        <text>Endonucleolytic cleavage of RNA, removing extra 3' nucleotides from tRNA precursor, generating 3' termini of tRNAs. A 3'-hydroxy group is left at the tRNA terminus and a 5'-phosphoryl group is left at the trailer molecule.</text>
        <dbReference type="EC" id="3.1.26.11"/>
    </reaction>
</comment>
<comment type="cofactor">
    <cofactor evidence="1">
        <name>Zn(2+)</name>
        <dbReference type="ChEBI" id="CHEBI:29105"/>
    </cofactor>
    <text evidence="1">Binds 2 Zn(2+) ions.</text>
</comment>
<comment type="subunit">
    <text evidence="1">Homodimer.</text>
</comment>
<comment type="similarity">
    <text evidence="1">Belongs to the RNase Z family.</text>
</comment>
<reference key="1">
    <citation type="journal article" date="2002" name="Proc. Natl. Acad. Sci. U.S.A.">
        <title>Genome sequence of Streptococcus mutans UA159, a cariogenic dental pathogen.</title>
        <authorList>
            <person name="Ajdic D.J."/>
            <person name="McShan W.M."/>
            <person name="McLaughlin R.E."/>
            <person name="Savic G."/>
            <person name="Chang J."/>
            <person name="Carson M.B."/>
            <person name="Primeaux C."/>
            <person name="Tian R."/>
            <person name="Kenton S."/>
            <person name="Jia H.G."/>
            <person name="Lin S.P."/>
            <person name="Qian Y."/>
            <person name="Li S."/>
            <person name="Zhu H."/>
            <person name="Najar F.Z."/>
            <person name="Lai H."/>
            <person name="White J."/>
            <person name="Roe B.A."/>
            <person name="Ferretti J.J."/>
        </authorList>
    </citation>
    <scope>NUCLEOTIDE SEQUENCE [LARGE SCALE GENOMIC DNA]</scope>
    <source>
        <strain>ATCC 700610 / UA159</strain>
    </source>
</reference>
<accession>Q8DT90</accession>
<feature type="chain" id="PRO_0000155905" description="Ribonuclease Z">
    <location>
        <begin position="1"/>
        <end position="309"/>
    </location>
</feature>
<feature type="active site" description="Proton acceptor" evidence="1">
    <location>
        <position position="67"/>
    </location>
</feature>
<feature type="binding site" evidence="1">
    <location>
        <position position="63"/>
    </location>
    <ligand>
        <name>Zn(2+)</name>
        <dbReference type="ChEBI" id="CHEBI:29105"/>
        <label>1</label>
        <note>catalytic</note>
    </ligand>
</feature>
<feature type="binding site" evidence="1">
    <location>
        <position position="65"/>
    </location>
    <ligand>
        <name>Zn(2+)</name>
        <dbReference type="ChEBI" id="CHEBI:29105"/>
        <label>1</label>
        <note>catalytic</note>
    </ligand>
</feature>
<feature type="binding site" evidence="1">
    <location>
        <position position="67"/>
    </location>
    <ligand>
        <name>Zn(2+)</name>
        <dbReference type="ChEBI" id="CHEBI:29105"/>
        <label>2</label>
        <note>catalytic</note>
    </ligand>
</feature>
<feature type="binding site" evidence="1">
    <location>
        <position position="68"/>
    </location>
    <ligand>
        <name>Zn(2+)</name>
        <dbReference type="ChEBI" id="CHEBI:29105"/>
        <label>2</label>
        <note>catalytic</note>
    </ligand>
</feature>
<feature type="binding site" evidence="1">
    <location>
        <position position="145"/>
    </location>
    <ligand>
        <name>Zn(2+)</name>
        <dbReference type="ChEBI" id="CHEBI:29105"/>
        <label>1</label>
        <note>catalytic</note>
    </ligand>
</feature>
<feature type="binding site" evidence="1">
    <location>
        <position position="216"/>
    </location>
    <ligand>
        <name>Zn(2+)</name>
        <dbReference type="ChEBI" id="CHEBI:29105"/>
        <label>1</label>
        <note>catalytic</note>
    </ligand>
</feature>
<feature type="binding site" evidence="1">
    <location>
        <position position="216"/>
    </location>
    <ligand>
        <name>Zn(2+)</name>
        <dbReference type="ChEBI" id="CHEBI:29105"/>
        <label>2</label>
        <note>catalytic</note>
    </ligand>
</feature>
<feature type="binding site" evidence="1">
    <location>
        <position position="274"/>
    </location>
    <ligand>
        <name>Zn(2+)</name>
        <dbReference type="ChEBI" id="CHEBI:29105"/>
        <label>2</label>
        <note>catalytic</note>
    </ligand>
</feature>